<gene>
    <name type="primary">EFR3</name>
    <name type="ORF">CIMG_03718</name>
</gene>
<protein>
    <recommendedName>
        <fullName>Protein EFR3</fullName>
    </recommendedName>
</protein>
<organism>
    <name type="scientific">Coccidioides immitis (strain RS)</name>
    <name type="common">Valley fever fungus</name>
    <dbReference type="NCBI Taxonomy" id="246410"/>
    <lineage>
        <taxon>Eukaryota</taxon>
        <taxon>Fungi</taxon>
        <taxon>Dikarya</taxon>
        <taxon>Ascomycota</taxon>
        <taxon>Pezizomycotina</taxon>
        <taxon>Eurotiomycetes</taxon>
        <taxon>Eurotiomycetidae</taxon>
        <taxon>Onygenales</taxon>
        <taxon>Onygenaceae</taxon>
        <taxon>Coccidioides</taxon>
    </lineage>
</organism>
<feature type="chain" id="PRO_0000270775" description="Protein EFR3">
    <location>
        <begin position="1"/>
        <end position="1288"/>
    </location>
</feature>
<feature type="region of interest" description="Disordered" evidence="1">
    <location>
        <begin position="500"/>
        <end position="522"/>
    </location>
</feature>
<feature type="region of interest" description="Disordered" evidence="1">
    <location>
        <begin position="816"/>
        <end position="835"/>
    </location>
</feature>
<feature type="region of interest" description="Disordered" evidence="1">
    <location>
        <begin position="906"/>
        <end position="964"/>
    </location>
</feature>
<feature type="region of interest" description="Disordered" evidence="1">
    <location>
        <begin position="980"/>
        <end position="1155"/>
    </location>
</feature>
<feature type="region of interest" description="Disordered" evidence="1">
    <location>
        <begin position="1167"/>
        <end position="1195"/>
    </location>
</feature>
<feature type="region of interest" description="Disordered" evidence="1">
    <location>
        <begin position="1208"/>
        <end position="1288"/>
    </location>
</feature>
<feature type="compositionally biased region" description="Polar residues" evidence="1">
    <location>
        <begin position="511"/>
        <end position="522"/>
    </location>
</feature>
<feature type="compositionally biased region" description="Polar residues" evidence="1">
    <location>
        <begin position="906"/>
        <end position="921"/>
    </location>
</feature>
<feature type="compositionally biased region" description="Polar residues" evidence="1">
    <location>
        <begin position="995"/>
        <end position="1012"/>
    </location>
</feature>
<feature type="compositionally biased region" description="Low complexity" evidence="1">
    <location>
        <begin position="1073"/>
        <end position="1083"/>
    </location>
</feature>
<feature type="compositionally biased region" description="Basic and acidic residues" evidence="1">
    <location>
        <begin position="1124"/>
        <end position="1139"/>
    </location>
</feature>
<feature type="compositionally biased region" description="Basic and acidic residues" evidence="1">
    <location>
        <begin position="1174"/>
        <end position="1190"/>
    </location>
</feature>
<feature type="compositionally biased region" description="Polar residues" evidence="1">
    <location>
        <begin position="1212"/>
        <end position="1221"/>
    </location>
</feature>
<name>EFR3_COCIM</name>
<reference key="1">
    <citation type="journal article" date="2009" name="Genome Res.">
        <title>Comparative genomic analyses of the human fungal pathogens Coccidioides and their relatives.</title>
        <authorList>
            <person name="Sharpton T.J."/>
            <person name="Stajich J.E."/>
            <person name="Rounsley S.D."/>
            <person name="Gardner M.J."/>
            <person name="Wortman J.R."/>
            <person name="Jordar V.S."/>
            <person name="Maiti R."/>
            <person name="Kodira C.D."/>
            <person name="Neafsey D.E."/>
            <person name="Zeng Q."/>
            <person name="Hung C.-Y."/>
            <person name="McMahan C."/>
            <person name="Muszewska A."/>
            <person name="Grynberg M."/>
            <person name="Mandel M.A."/>
            <person name="Kellner E.M."/>
            <person name="Barker B.M."/>
            <person name="Galgiani J.N."/>
            <person name="Orbach M.J."/>
            <person name="Kirkland T.N."/>
            <person name="Cole G.T."/>
            <person name="Henn M.R."/>
            <person name="Birren B.W."/>
            <person name="Taylor J.W."/>
        </authorList>
    </citation>
    <scope>NUCLEOTIDE SEQUENCE [LARGE SCALE GENOMIC DNA]</scope>
    <source>
        <strain>RS</strain>
    </source>
</reference>
<reference key="2">
    <citation type="journal article" date="2010" name="Genome Res.">
        <title>Population genomic sequencing of Coccidioides fungi reveals recent hybridization and transposon control.</title>
        <authorList>
            <person name="Neafsey D.E."/>
            <person name="Barker B.M."/>
            <person name="Sharpton T.J."/>
            <person name="Stajich J.E."/>
            <person name="Park D.J."/>
            <person name="Whiston E."/>
            <person name="Hung C.-Y."/>
            <person name="McMahan C."/>
            <person name="White J."/>
            <person name="Sykes S."/>
            <person name="Heiman D."/>
            <person name="Young S."/>
            <person name="Zeng Q."/>
            <person name="Abouelleil A."/>
            <person name="Aftuck L."/>
            <person name="Bessette D."/>
            <person name="Brown A."/>
            <person name="FitzGerald M."/>
            <person name="Lui A."/>
            <person name="Macdonald J.P."/>
            <person name="Priest M."/>
            <person name="Orbach M.J."/>
            <person name="Galgiani J.N."/>
            <person name="Kirkland T.N."/>
            <person name="Cole G.T."/>
            <person name="Birren B.W."/>
            <person name="Henn M.R."/>
            <person name="Taylor J.W."/>
            <person name="Rounsley S.D."/>
        </authorList>
    </citation>
    <scope>GENOME REANNOTATION</scope>
    <source>
        <strain>RS</strain>
    </source>
</reference>
<sequence length="1288" mass="141333">MNSVRQSCRPKHQVLILKCYPRFQKGVQSVKPNSSELSYLLYYASTRRSKLQKVGAFLEKRAARDVWRGKLGNVQVTLQILAALIEKVPRDLPLYARSILTVLDIVLRSREISMVEETIPTFELFCRHQDSATLTADHEYIIQYRELVGTYASFASTETPVTTKTPMSAPMALRWRTVGLKAIKSIVTSEILSTDGAKQLNVVIPVILQNLYASGDHRLSPLQEKAKSSERLEREQFRRRRMSISTVQTVDTIDGNGDPESASGSAADADMMAEMEARVLALRCLEKVFSGTNRVQIRFATSLVLSFIVSRRPPRTQEKQRSANGKTDGNWATNLLEVIANWSPVQDRFIILVTLLETLVERPLVDGQLEPQLTLASMMDWLLGSSVNLIGLSVMDVLIGLLQFVRQLLQLGNGTQTLVPHHGLSTLIKPLPQMDETAATNSQTNGENEKAPTADSLRHELLELLENCIGNLATHVYYGDQVSDMIRTIVIRIKPSPALEGENAHHESESDNAIQKSSPSRSDYTAESYFSSSAARITALRSVKDILVVANLRKSTSGTDPDARNRVPLHVWEGTHWLLQDPQWEVRNAYVDAFLSWLQLETKKSDLRVPTEHTRVSKMGNRRDTSDIPERLARRIVSTAPQEENVAACHASSFLQLLHLTIFDVVSESSTTESDILRLYLLLVNLVEHLGVNAARYTLPVLMKLQDTLPSSVSASKALHIGSLVHGYLLALVEKFDLEGTRPAAEIINEISKRKKRGVWLDKIQLPPRPLHHIQPSLDTVIEQASLPQPDKNIYSRFTSLEELVRQIESTYNSSYVSPPISPSNSPGRSFSIPSLGLNNSTNPHVPAGSQLPLHVKEHMLAPWSKEACLDAIEKEKAKTSSLSGSRTATGAFAAGLNALNMSAYNSGPGSPTGTAPSASNRQDRPVSAAYAPTGNLAGFQKTRRQSIPERRVSPAASSRDSTVRVNELRRVLSVINSSNVRHPSPLRGRHRVDSTVSSTESMVSDNLSFSDAGTAAADRPLSSRENLTAPRGLNRYHGGPNQLHGDFEPEYIPPVPPLPSSLAIPGGFPADSRSGSSVTSPSHSPPRSDRPSTAPGRPARTHSKSKGSNASTLRQSRSLSRKKSLDTSLHERSERRATDLNGIPSGHSHGYSEDLGDIGIAITADTTEIAPHTQDRADTSSQWSRREASRTLSFGRRVDMDKLLEGLSAPNDDQQPNGTGEVSGIKIASSGVEGSSSLTRMGKKPSFQSMNDEKKASYSRKTSLLSPGAAPWNRLSSDRGGIGPPPY</sequence>
<dbReference type="EMBL" id="GG704916">
    <property type="protein sequence ID" value="EAS32694.3"/>
    <property type="molecule type" value="Genomic_DNA"/>
</dbReference>
<dbReference type="RefSeq" id="XP_001244277.1">
    <property type="nucleotide sequence ID" value="XM_001244276.2"/>
</dbReference>
<dbReference type="STRING" id="246410.Q1E145"/>
<dbReference type="GeneID" id="4563335"/>
<dbReference type="KEGG" id="cim:CIMG_03718"/>
<dbReference type="VEuPathDB" id="FungiDB:CIMG_03718"/>
<dbReference type="InParanoid" id="Q1E145"/>
<dbReference type="OMA" id="ATHVYYT"/>
<dbReference type="OrthoDB" id="19232at2759"/>
<dbReference type="Proteomes" id="UP000001261">
    <property type="component" value="Unassembled WGS sequence"/>
</dbReference>
<dbReference type="GO" id="GO:0005886">
    <property type="term" value="C:plasma membrane"/>
    <property type="evidence" value="ECO:0007669"/>
    <property type="project" value="TreeGrafter"/>
</dbReference>
<dbReference type="GO" id="GO:0072659">
    <property type="term" value="P:protein localization to plasma membrane"/>
    <property type="evidence" value="ECO:0007669"/>
    <property type="project" value="InterPro"/>
</dbReference>
<dbReference type="InterPro" id="IPR016024">
    <property type="entry name" value="ARM-type_fold"/>
</dbReference>
<dbReference type="InterPro" id="IPR039786">
    <property type="entry name" value="EFR3"/>
</dbReference>
<dbReference type="InterPro" id="IPR049150">
    <property type="entry name" value="EFR3_HEAT-like_rpt"/>
</dbReference>
<dbReference type="PANTHER" id="PTHR47766">
    <property type="entry name" value="PROTEIN EFR3"/>
    <property type="match status" value="1"/>
</dbReference>
<dbReference type="PANTHER" id="PTHR47766:SF1">
    <property type="entry name" value="PROTEIN EFR3"/>
    <property type="match status" value="1"/>
</dbReference>
<dbReference type="Pfam" id="PF21072">
    <property type="entry name" value="EFR3"/>
    <property type="match status" value="2"/>
</dbReference>
<dbReference type="SUPFAM" id="SSF48371">
    <property type="entry name" value="ARM repeat"/>
    <property type="match status" value="1"/>
</dbReference>
<comment type="similarity">
    <text evidence="2">Belongs to the EFR3 family.</text>
</comment>
<keyword id="KW-1185">Reference proteome</keyword>
<proteinExistence type="inferred from homology"/>
<evidence type="ECO:0000256" key="1">
    <source>
        <dbReference type="SAM" id="MobiDB-lite"/>
    </source>
</evidence>
<evidence type="ECO:0000305" key="2"/>
<accession>Q1E145</accession>
<accession>J3KCA6</accession>